<name>MPGS_PYRHO</name>
<protein>
    <recommendedName>
        <fullName>Mannosyl-3-phosphoglycerate synthase</fullName>
        <shortName>MPG synthase</shortName>
        <shortName>MPGS</shortName>
        <ecNumber>2.4.1.217</ecNumber>
    </recommendedName>
</protein>
<reference key="1">
    <citation type="journal article" date="1998" name="DNA Res.">
        <title>Complete sequence and gene organization of the genome of a hyper-thermophilic archaebacterium, Pyrococcus horikoshii OT3.</title>
        <authorList>
            <person name="Kawarabayasi Y."/>
            <person name="Sawada M."/>
            <person name="Horikawa H."/>
            <person name="Haikawa Y."/>
            <person name="Hino Y."/>
            <person name="Yamamoto S."/>
            <person name="Sekine M."/>
            <person name="Baba S."/>
            <person name="Kosugi H."/>
            <person name="Hosoyama A."/>
            <person name="Nagai Y."/>
            <person name="Sakai M."/>
            <person name="Ogura K."/>
            <person name="Otsuka R."/>
            <person name="Nakazawa H."/>
            <person name="Takamiya M."/>
            <person name="Ohfuku Y."/>
            <person name="Funahashi T."/>
            <person name="Tanaka T."/>
            <person name="Kudoh Y."/>
            <person name="Yamazaki J."/>
            <person name="Kushida N."/>
            <person name="Oguchi A."/>
            <person name="Aoki K."/>
            <person name="Yoshizawa T."/>
            <person name="Nakamura Y."/>
            <person name="Robb F.T."/>
            <person name="Horikoshi K."/>
            <person name="Masuchi Y."/>
            <person name="Shizuya H."/>
            <person name="Kikuchi H."/>
        </authorList>
    </citation>
    <scope>NUCLEOTIDE SEQUENCE [LARGE SCALE GENOMIC DNA]</scope>
    <source>
        <strain>ATCC 700860 / DSM 12428 / JCM 9974 / NBRC 100139 / OT-3</strain>
    </source>
</reference>
<reference key="2">
    <citation type="journal article" date="2001" name="J. Biol. Chem.">
        <title>Pathway for the synthesis of mannosylglycerate in the hyperthermophilic archaeon Pyrococcus horikoshii. Biochemical and genetic characterization of key enzymes.</title>
        <authorList>
            <person name="Empadinhas N."/>
            <person name="Marugg J.D."/>
            <person name="Borges N."/>
            <person name="Santos H."/>
            <person name="da Costa M.S."/>
        </authorList>
    </citation>
    <scope>CHARACTERIZATION</scope>
    <source>
        <strain>ATCC 700860 / DSM 12428 / JCM 9974 / NBRC 100139 / OT-3</strain>
    </source>
</reference>
<dbReference type="EC" id="2.4.1.217"/>
<dbReference type="EMBL" id="BA000001">
    <property type="protein sequence ID" value="BAA30023.1"/>
    <property type="molecule type" value="Genomic_DNA"/>
</dbReference>
<dbReference type="PIR" id="A71083">
    <property type="entry name" value="A71083"/>
</dbReference>
<dbReference type="RefSeq" id="WP_010885017.1">
    <property type="nucleotide sequence ID" value="NC_000961.1"/>
</dbReference>
<dbReference type="PDB" id="2ZU7">
    <property type="method" value="X-ray"/>
    <property type="resolution" value="2.50 A"/>
    <property type="chains" value="A/B=1-394"/>
</dbReference>
<dbReference type="PDB" id="2ZU8">
    <property type="method" value="X-ray"/>
    <property type="resolution" value="2.40 A"/>
    <property type="chains" value="A/B=1-394"/>
</dbReference>
<dbReference type="PDB" id="2ZU9">
    <property type="method" value="X-ray"/>
    <property type="resolution" value="2.00 A"/>
    <property type="chains" value="A/B=1-394"/>
</dbReference>
<dbReference type="PDBsum" id="2ZU7"/>
<dbReference type="PDBsum" id="2ZU8"/>
<dbReference type="PDBsum" id="2ZU9"/>
<dbReference type="SMR" id="O58689"/>
<dbReference type="STRING" id="70601.gene:9377880"/>
<dbReference type="CAZy" id="GT55">
    <property type="family name" value="Glycosyltransferase Family 55"/>
</dbReference>
<dbReference type="EnsemblBacteria" id="BAA30023">
    <property type="protein sequence ID" value="BAA30023"/>
    <property type="gene ID" value="BAA30023"/>
</dbReference>
<dbReference type="GeneID" id="1443252"/>
<dbReference type="KEGG" id="pho:PH0927"/>
<dbReference type="eggNOG" id="arCOG04158">
    <property type="taxonomic scope" value="Archaea"/>
</dbReference>
<dbReference type="OrthoDB" id="9468at2157"/>
<dbReference type="BioCyc" id="MetaCyc:MONOMER-13380"/>
<dbReference type="SABIO-RK" id="O58689"/>
<dbReference type="UniPathway" id="UPA00130">
    <property type="reaction ID" value="UER00192"/>
</dbReference>
<dbReference type="EvolutionaryTrace" id="O58689"/>
<dbReference type="Proteomes" id="UP000000752">
    <property type="component" value="Chromosome"/>
</dbReference>
<dbReference type="GO" id="GO:0005737">
    <property type="term" value="C:cytoplasm"/>
    <property type="evidence" value="ECO:0007669"/>
    <property type="project" value="UniProtKB-SubCell"/>
</dbReference>
<dbReference type="GO" id="GO:0050504">
    <property type="term" value="F:mannosyl-3-phosphoglycerate synthase activity"/>
    <property type="evidence" value="ECO:0007669"/>
    <property type="project" value="UniProtKB-EC"/>
</dbReference>
<dbReference type="GO" id="GO:0051479">
    <property type="term" value="P:mannosylglycerate biosynthetic process"/>
    <property type="evidence" value="ECO:0007669"/>
    <property type="project" value="UniProtKB-UniPathway"/>
</dbReference>
<dbReference type="CDD" id="cd00761">
    <property type="entry name" value="Glyco_tranf_GTA_type"/>
    <property type="match status" value="1"/>
</dbReference>
<dbReference type="Gene3D" id="3.90.550.10">
    <property type="entry name" value="Spore Coat Polysaccharide Biosynthesis Protein SpsA, Chain A"/>
    <property type="match status" value="1"/>
</dbReference>
<dbReference type="InterPro" id="IPR029044">
    <property type="entry name" value="Nucleotide-diphossugar_trans"/>
</dbReference>
<dbReference type="InterPro" id="IPR012812">
    <property type="entry name" value="Osmo_MPG_synth"/>
</dbReference>
<dbReference type="NCBIfam" id="TIGR02460">
    <property type="entry name" value="osmo_MPGsynth"/>
    <property type="match status" value="1"/>
</dbReference>
<dbReference type="Pfam" id="PF09488">
    <property type="entry name" value="Osmo_MPGsynth"/>
    <property type="match status" value="1"/>
</dbReference>
<dbReference type="SUPFAM" id="SSF53448">
    <property type="entry name" value="Nucleotide-diphospho-sugar transferases"/>
    <property type="match status" value="1"/>
</dbReference>
<keyword id="KW-0002">3D-structure</keyword>
<keyword id="KW-0963">Cytoplasm</keyword>
<keyword id="KW-0328">Glycosyltransferase</keyword>
<keyword id="KW-0460">Magnesium</keyword>
<keyword id="KW-0808">Transferase</keyword>
<accession>O58689</accession>
<sequence>MLLEAPVYKEIFGAVTIHEVQKVIKMDTETEEVPIYTISNIPREKIYDLLGKMAVIVPMKNEKLHLVDGVLKAIPHKCPIIIVSNSKREGPNRYKLEVDLIRHFYNLTHSKIIMIHQKDPGLAKAFKEVGYTDILDENGMIRSGKGEGMLVGLLLAKAIGAEYVGFVDADNYIPGAVNEYVKDYAAGFLMSESEYTMVRLHWRHKPKVTKGTLYFKKWGRVSEITNHYLNLLVSEHTAFETTIMVTGNAGEHAMTMKLAEILPFSTGYSIEPYEIVYILERFGKWENVEEFKDVFDQGIEIFQIETLNPHFHEDKGKEHVKEMLLLSLATIYHSKLATDNLRKRILKDLRDHGILGENEEPPKPLVMRPIKEIPIKEWMDIVEGNSETLLRFEL</sequence>
<organism>
    <name type="scientific">Pyrococcus horikoshii (strain ATCC 700860 / DSM 12428 / JCM 9974 / NBRC 100139 / OT-3)</name>
    <dbReference type="NCBI Taxonomy" id="70601"/>
    <lineage>
        <taxon>Archaea</taxon>
        <taxon>Methanobacteriati</taxon>
        <taxon>Methanobacteriota</taxon>
        <taxon>Thermococci</taxon>
        <taxon>Thermococcales</taxon>
        <taxon>Thermococcaceae</taxon>
        <taxon>Pyrococcus</taxon>
    </lineage>
</organism>
<comment type="function">
    <text>Transfers a mannosyl group from GDP-mannose to phosphoglycerate to form mannosyl-3-phosphoglycerate (MPG). The enzyme is absolutely specific for GDP-mannose and 3-phosphoglycerate, and transfers the mannosyl group with retention of configuration.</text>
</comment>
<comment type="catalytic activity">
    <reaction>
        <text>(2R)-3-phosphoglycerate + GDP-alpha-D-mannose = 2-O-(alpha-D-mannosyl)-3-phosphoglycerate + GDP + H(+)</text>
        <dbReference type="Rhea" id="RHEA:13537"/>
        <dbReference type="ChEBI" id="CHEBI:15378"/>
        <dbReference type="ChEBI" id="CHEBI:57527"/>
        <dbReference type="ChEBI" id="CHEBI:57744"/>
        <dbReference type="ChEBI" id="CHEBI:58189"/>
        <dbReference type="ChEBI" id="CHEBI:58272"/>
        <dbReference type="EC" id="2.4.1.217"/>
    </reaction>
</comment>
<comment type="cofactor">
    <cofactor>
        <name>Mg(2+)</name>
        <dbReference type="ChEBI" id="CHEBI:18420"/>
    </cofactor>
</comment>
<comment type="pathway">
    <text>Carbohydrate biosynthesis; 2-(alpha-D-mannosyl)-D-glycerate biosynthesis; 2-(alpha-D-mannosyl)-D-glycerate from GDP-alpha-D-mannose (MPG route): step 1/2.</text>
</comment>
<comment type="subcellular location">
    <subcellularLocation>
        <location>Cytoplasm</location>
    </subcellularLocation>
</comment>
<comment type="similarity">
    <text evidence="1">Belongs to the glycosyltransferase 2 family.</text>
</comment>
<proteinExistence type="evidence at protein level"/>
<evidence type="ECO:0000305" key="1"/>
<evidence type="ECO:0007829" key="2">
    <source>
        <dbReference type="PDB" id="2ZU8"/>
    </source>
</evidence>
<evidence type="ECO:0007829" key="3">
    <source>
        <dbReference type="PDB" id="2ZU9"/>
    </source>
</evidence>
<feature type="chain" id="PRO_0000059287" description="Mannosyl-3-phosphoglycerate synthase">
    <location>
        <begin position="1"/>
        <end position="394"/>
    </location>
</feature>
<feature type="strand" evidence="3">
    <location>
        <begin position="2"/>
        <end position="4"/>
    </location>
</feature>
<feature type="strand" evidence="3">
    <location>
        <begin position="9"/>
        <end position="12"/>
    </location>
</feature>
<feature type="strand" evidence="3">
    <location>
        <begin position="15"/>
        <end position="18"/>
    </location>
</feature>
<feature type="strand" evidence="3">
    <location>
        <begin position="21"/>
        <end position="26"/>
    </location>
</feature>
<feature type="strand" evidence="3">
    <location>
        <begin position="38"/>
        <end position="40"/>
    </location>
</feature>
<feature type="helix" evidence="3">
    <location>
        <begin position="43"/>
        <end position="50"/>
    </location>
</feature>
<feature type="strand" evidence="3">
    <location>
        <begin position="53"/>
        <end position="61"/>
    </location>
</feature>
<feature type="helix" evidence="3">
    <location>
        <begin position="64"/>
        <end position="73"/>
    </location>
</feature>
<feature type="strand" evidence="3">
    <location>
        <begin position="80"/>
        <end position="84"/>
    </location>
</feature>
<feature type="strand" evidence="3">
    <location>
        <begin position="89"/>
        <end position="91"/>
    </location>
</feature>
<feature type="helix" evidence="3">
    <location>
        <begin position="93"/>
        <end position="108"/>
    </location>
</feature>
<feature type="strand" evidence="3">
    <location>
        <begin position="112"/>
        <end position="116"/>
    </location>
</feature>
<feature type="helix" evidence="3">
    <location>
        <begin position="120"/>
        <end position="128"/>
    </location>
</feature>
<feature type="strand" evidence="3">
    <location>
        <begin position="139"/>
        <end position="141"/>
    </location>
</feature>
<feature type="helix" evidence="3">
    <location>
        <begin position="145"/>
        <end position="158"/>
    </location>
</feature>
<feature type="strand" evidence="3">
    <location>
        <begin position="162"/>
        <end position="166"/>
    </location>
</feature>
<feature type="helix" evidence="3">
    <location>
        <begin position="174"/>
        <end position="190"/>
    </location>
</feature>
<feature type="strand" evidence="3">
    <location>
        <begin position="193"/>
        <end position="201"/>
    </location>
</feature>
<feature type="helix" evidence="3">
    <location>
        <begin position="221"/>
        <end position="237"/>
    </location>
</feature>
<feature type="strand" evidence="3">
    <location>
        <begin position="250"/>
        <end position="255"/>
    </location>
</feature>
<feature type="helix" evidence="3">
    <location>
        <begin position="256"/>
        <end position="259"/>
    </location>
</feature>
<feature type="strand" evidence="3">
    <location>
        <begin position="264"/>
        <end position="266"/>
    </location>
</feature>
<feature type="helix" evidence="3">
    <location>
        <begin position="267"/>
        <end position="269"/>
    </location>
</feature>
<feature type="helix" evidence="3">
    <location>
        <begin position="270"/>
        <end position="282"/>
    </location>
</feature>
<feature type="strand" evidence="2">
    <location>
        <begin position="283"/>
        <end position="285"/>
    </location>
</feature>
<feature type="helix" evidence="3">
    <location>
        <begin position="289"/>
        <end position="291"/>
    </location>
</feature>
<feature type="helix" evidence="3">
    <location>
        <begin position="292"/>
        <end position="297"/>
    </location>
</feature>
<feature type="strand" evidence="3">
    <location>
        <begin position="299"/>
        <end position="305"/>
    </location>
</feature>
<feature type="helix" evidence="3">
    <location>
        <begin position="317"/>
        <end position="332"/>
    </location>
</feature>
<feature type="helix" evidence="3">
    <location>
        <begin position="339"/>
        <end position="351"/>
    </location>
</feature>
<feature type="strand" evidence="2">
    <location>
        <begin position="370"/>
        <end position="373"/>
    </location>
</feature>
<feature type="helix" evidence="3">
    <location>
        <begin position="375"/>
        <end position="385"/>
    </location>
</feature>
<feature type="strand" evidence="3">
    <location>
        <begin position="390"/>
        <end position="392"/>
    </location>
</feature>
<gene>
    <name type="primary">mngA</name>
    <name type="ordered locus">PH0927</name>
</gene>